<organism>
    <name type="scientific">Paracidovorax citrulli (strain AAC00-1)</name>
    <name type="common">Acidovorax citrulli</name>
    <dbReference type="NCBI Taxonomy" id="397945"/>
    <lineage>
        <taxon>Bacteria</taxon>
        <taxon>Pseudomonadati</taxon>
        <taxon>Pseudomonadota</taxon>
        <taxon>Betaproteobacteria</taxon>
        <taxon>Burkholderiales</taxon>
        <taxon>Comamonadaceae</taxon>
        <taxon>Paracidovorax</taxon>
    </lineage>
</organism>
<proteinExistence type="inferred from homology"/>
<sequence>MTRSLKKGPFVDHHLLAKVEKAVATKDKKPVKTWSRRSMVLPEFIGLTIAVHNGKQHVPVYITDQMVGHKLGEFALTRTFKGHPADKKVQKK</sequence>
<dbReference type="EMBL" id="CP000512">
    <property type="protein sequence ID" value="ABM30949.1"/>
    <property type="molecule type" value="Genomic_DNA"/>
</dbReference>
<dbReference type="RefSeq" id="WP_011793526.1">
    <property type="nucleotide sequence ID" value="NC_008752.1"/>
</dbReference>
<dbReference type="SMR" id="A1TJ11"/>
<dbReference type="STRING" id="397945.Aave_0342"/>
<dbReference type="GeneID" id="79790147"/>
<dbReference type="KEGG" id="aav:Aave_0342"/>
<dbReference type="eggNOG" id="COG0185">
    <property type="taxonomic scope" value="Bacteria"/>
</dbReference>
<dbReference type="HOGENOM" id="CLU_144911_0_1_4"/>
<dbReference type="OrthoDB" id="9797833at2"/>
<dbReference type="Proteomes" id="UP000002596">
    <property type="component" value="Chromosome"/>
</dbReference>
<dbReference type="GO" id="GO:0005737">
    <property type="term" value="C:cytoplasm"/>
    <property type="evidence" value="ECO:0007669"/>
    <property type="project" value="UniProtKB-ARBA"/>
</dbReference>
<dbReference type="GO" id="GO:0015935">
    <property type="term" value="C:small ribosomal subunit"/>
    <property type="evidence" value="ECO:0007669"/>
    <property type="project" value="InterPro"/>
</dbReference>
<dbReference type="GO" id="GO:0019843">
    <property type="term" value="F:rRNA binding"/>
    <property type="evidence" value="ECO:0007669"/>
    <property type="project" value="UniProtKB-UniRule"/>
</dbReference>
<dbReference type="GO" id="GO:0003735">
    <property type="term" value="F:structural constituent of ribosome"/>
    <property type="evidence" value="ECO:0007669"/>
    <property type="project" value="InterPro"/>
</dbReference>
<dbReference type="GO" id="GO:0000028">
    <property type="term" value="P:ribosomal small subunit assembly"/>
    <property type="evidence" value="ECO:0007669"/>
    <property type="project" value="TreeGrafter"/>
</dbReference>
<dbReference type="GO" id="GO:0006412">
    <property type="term" value="P:translation"/>
    <property type="evidence" value="ECO:0007669"/>
    <property type="project" value="UniProtKB-UniRule"/>
</dbReference>
<dbReference type="FunFam" id="3.30.860.10:FF:000001">
    <property type="entry name" value="30S ribosomal protein S19"/>
    <property type="match status" value="1"/>
</dbReference>
<dbReference type="Gene3D" id="3.30.860.10">
    <property type="entry name" value="30s Ribosomal Protein S19, Chain A"/>
    <property type="match status" value="1"/>
</dbReference>
<dbReference type="HAMAP" id="MF_00531">
    <property type="entry name" value="Ribosomal_uS19"/>
    <property type="match status" value="1"/>
</dbReference>
<dbReference type="InterPro" id="IPR002222">
    <property type="entry name" value="Ribosomal_uS19"/>
</dbReference>
<dbReference type="InterPro" id="IPR005732">
    <property type="entry name" value="Ribosomal_uS19_bac-type"/>
</dbReference>
<dbReference type="InterPro" id="IPR020934">
    <property type="entry name" value="Ribosomal_uS19_CS"/>
</dbReference>
<dbReference type="InterPro" id="IPR023575">
    <property type="entry name" value="Ribosomal_uS19_SF"/>
</dbReference>
<dbReference type="NCBIfam" id="TIGR01050">
    <property type="entry name" value="rpsS_bact"/>
    <property type="match status" value="1"/>
</dbReference>
<dbReference type="PANTHER" id="PTHR11880">
    <property type="entry name" value="RIBOSOMAL PROTEIN S19P FAMILY MEMBER"/>
    <property type="match status" value="1"/>
</dbReference>
<dbReference type="PANTHER" id="PTHR11880:SF8">
    <property type="entry name" value="SMALL RIBOSOMAL SUBUNIT PROTEIN US19M"/>
    <property type="match status" value="1"/>
</dbReference>
<dbReference type="Pfam" id="PF00203">
    <property type="entry name" value="Ribosomal_S19"/>
    <property type="match status" value="1"/>
</dbReference>
<dbReference type="PIRSF" id="PIRSF002144">
    <property type="entry name" value="Ribosomal_S19"/>
    <property type="match status" value="1"/>
</dbReference>
<dbReference type="PRINTS" id="PR00975">
    <property type="entry name" value="RIBOSOMALS19"/>
</dbReference>
<dbReference type="SUPFAM" id="SSF54570">
    <property type="entry name" value="Ribosomal protein S19"/>
    <property type="match status" value="1"/>
</dbReference>
<dbReference type="PROSITE" id="PS00323">
    <property type="entry name" value="RIBOSOMAL_S19"/>
    <property type="match status" value="1"/>
</dbReference>
<gene>
    <name evidence="1" type="primary">rpsS</name>
    <name type="ordered locus">Aave_0342</name>
</gene>
<keyword id="KW-0687">Ribonucleoprotein</keyword>
<keyword id="KW-0689">Ribosomal protein</keyword>
<keyword id="KW-0694">RNA-binding</keyword>
<keyword id="KW-0699">rRNA-binding</keyword>
<evidence type="ECO:0000255" key="1">
    <source>
        <dbReference type="HAMAP-Rule" id="MF_00531"/>
    </source>
</evidence>
<evidence type="ECO:0000305" key="2"/>
<reference key="1">
    <citation type="submission" date="2006-12" db="EMBL/GenBank/DDBJ databases">
        <title>Complete sequence of Acidovorax avenae subsp. citrulli AAC00-1.</title>
        <authorList>
            <person name="Copeland A."/>
            <person name="Lucas S."/>
            <person name="Lapidus A."/>
            <person name="Barry K."/>
            <person name="Detter J.C."/>
            <person name="Glavina del Rio T."/>
            <person name="Dalin E."/>
            <person name="Tice H."/>
            <person name="Pitluck S."/>
            <person name="Kiss H."/>
            <person name="Brettin T."/>
            <person name="Bruce D."/>
            <person name="Han C."/>
            <person name="Tapia R."/>
            <person name="Gilna P."/>
            <person name="Schmutz J."/>
            <person name="Larimer F."/>
            <person name="Land M."/>
            <person name="Hauser L."/>
            <person name="Kyrpides N."/>
            <person name="Kim E."/>
            <person name="Stahl D."/>
            <person name="Richardson P."/>
        </authorList>
    </citation>
    <scope>NUCLEOTIDE SEQUENCE [LARGE SCALE GENOMIC DNA]</scope>
    <source>
        <strain>AAC00-1</strain>
    </source>
</reference>
<feature type="chain" id="PRO_1000051002" description="Small ribosomal subunit protein uS19">
    <location>
        <begin position="1"/>
        <end position="92"/>
    </location>
</feature>
<name>RS19_PARC0</name>
<accession>A1TJ11</accession>
<protein>
    <recommendedName>
        <fullName evidence="1">Small ribosomal subunit protein uS19</fullName>
    </recommendedName>
    <alternativeName>
        <fullName evidence="2">30S ribosomal protein S19</fullName>
    </alternativeName>
</protein>
<comment type="function">
    <text evidence="1">Protein S19 forms a complex with S13 that binds strongly to the 16S ribosomal RNA.</text>
</comment>
<comment type="similarity">
    <text evidence="1">Belongs to the universal ribosomal protein uS19 family.</text>
</comment>